<gene>
    <name evidence="1" type="primary">apt</name>
    <name type="ordered locus">ECIAI39_0202</name>
</gene>
<keyword id="KW-0963">Cytoplasm</keyword>
<keyword id="KW-0328">Glycosyltransferase</keyword>
<keyword id="KW-0660">Purine salvage</keyword>
<keyword id="KW-0808">Transferase</keyword>
<name>APT_ECO7I</name>
<reference key="1">
    <citation type="journal article" date="2009" name="PLoS Genet.">
        <title>Organised genome dynamics in the Escherichia coli species results in highly diverse adaptive paths.</title>
        <authorList>
            <person name="Touchon M."/>
            <person name="Hoede C."/>
            <person name="Tenaillon O."/>
            <person name="Barbe V."/>
            <person name="Baeriswyl S."/>
            <person name="Bidet P."/>
            <person name="Bingen E."/>
            <person name="Bonacorsi S."/>
            <person name="Bouchier C."/>
            <person name="Bouvet O."/>
            <person name="Calteau A."/>
            <person name="Chiapello H."/>
            <person name="Clermont O."/>
            <person name="Cruveiller S."/>
            <person name="Danchin A."/>
            <person name="Diard M."/>
            <person name="Dossat C."/>
            <person name="Karoui M.E."/>
            <person name="Frapy E."/>
            <person name="Garry L."/>
            <person name="Ghigo J.M."/>
            <person name="Gilles A.M."/>
            <person name="Johnson J."/>
            <person name="Le Bouguenec C."/>
            <person name="Lescat M."/>
            <person name="Mangenot S."/>
            <person name="Martinez-Jehanne V."/>
            <person name="Matic I."/>
            <person name="Nassif X."/>
            <person name="Oztas S."/>
            <person name="Petit M.A."/>
            <person name="Pichon C."/>
            <person name="Rouy Z."/>
            <person name="Ruf C.S."/>
            <person name="Schneider D."/>
            <person name="Tourret J."/>
            <person name="Vacherie B."/>
            <person name="Vallenet D."/>
            <person name="Medigue C."/>
            <person name="Rocha E.P.C."/>
            <person name="Denamur E."/>
        </authorList>
    </citation>
    <scope>NUCLEOTIDE SEQUENCE [LARGE SCALE GENOMIC DNA]</scope>
    <source>
        <strain>IAI39 / ExPEC</strain>
    </source>
</reference>
<protein>
    <recommendedName>
        <fullName evidence="1">Adenine phosphoribosyltransferase</fullName>
        <shortName evidence="1">APRT</shortName>
        <ecNumber evidence="1">2.4.2.7</ecNumber>
    </recommendedName>
</protein>
<dbReference type="EC" id="2.4.2.7" evidence="1"/>
<dbReference type="EMBL" id="CU928164">
    <property type="protein sequence ID" value="CAR16342.1"/>
    <property type="molecule type" value="Genomic_DNA"/>
</dbReference>
<dbReference type="RefSeq" id="WP_000127356.1">
    <property type="nucleotide sequence ID" value="NC_011750.1"/>
</dbReference>
<dbReference type="RefSeq" id="YP_002406248.1">
    <property type="nucleotide sequence ID" value="NC_011750.1"/>
</dbReference>
<dbReference type="SMR" id="B7NIG1"/>
<dbReference type="STRING" id="585057.ECIAI39_0202"/>
<dbReference type="GeneID" id="93776981"/>
<dbReference type="KEGG" id="ect:ECIAI39_0202"/>
<dbReference type="PATRIC" id="fig|585057.6.peg.215"/>
<dbReference type="HOGENOM" id="CLU_063339_3_0_6"/>
<dbReference type="UniPathway" id="UPA00588">
    <property type="reaction ID" value="UER00646"/>
</dbReference>
<dbReference type="Proteomes" id="UP000000749">
    <property type="component" value="Chromosome"/>
</dbReference>
<dbReference type="GO" id="GO:0005737">
    <property type="term" value="C:cytoplasm"/>
    <property type="evidence" value="ECO:0007669"/>
    <property type="project" value="UniProtKB-SubCell"/>
</dbReference>
<dbReference type="GO" id="GO:0002055">
    <property type="term" value="F:adenine binding"/>
    <property type="evidence" value="ECO:0007669"/>
    <property type="project" value="TreeGrafter"/>
</dbReference>
<dbReference type="GO" id="GO:0003999">
    <property type="term" value="F:adenine phosphoribosyltransferase activity"/>
    <property type="evidence" value="ECO:0007669"/>
    <property type="project" value="UniProtKB-UniRule"/>
</dbReference>
<dbReference type="GO" id="GO:0016208">
    <property type="term" value="F:AMP binding"/>
    <property type="evidence" value="ECO:0007669"/>
    <property type="project" value="TreeGrafter"/>
</dbReference>
<dbReference type="GO" id="GO:0006168">
    <property type="term" value="P:adenine salvage"/>
    <property type="evidence" value="ECO:0007669"/>
    <property type="project" value="InterPro"/>
</dbReference>
<dbReference type="GO" id="GO:0044209">
    <property type="term" value="P:AMP salvage"/>
    <property type="evidence" value="ECO:0007669"/>
    <property type="project" value="UniProtKB-UniRule"/>
</dbReference>
<dbReference type="GO" id="GO:0006166">
    <property type="term" value="P:purine ribonucleoside salvage"/>
    <property type="evidence" value="ECO:0007669"/>
    <property type="project" value="UniProtKB-KW"/>
</dbReference>
<dbReference type="CDD" id="cd06223">
    <property type="entry name" value="PRTases_typeI"/>
    <property type="match status" value="1"/>
</dbReference>
<dbReference type="FunFam" id="3.40.50.2020:FF:000004">
    <property type="entry name" value="Adenine phosphoribosyltransferase"/>
    <property type="match status" value="1"/>
</dbReference>
<dbReference type="Gene3D" id="3.40.50.2020">
    <property type="match status" value="1"/>
</dbReference>
<dbReference type="HAMAP" id="MF_00004">
    <property type="entry name" value="Aden_phosphoribosyltr"/>
    <property type="match status" value="1"/>
</dbReference>
<dbReference type="InterPro" id="IPR005764">
    <property type="entry name" value="Ade_phspho_trans"/>
</dbReference>
<dbReference type="InterPro" id="IPR000836">
    <property type="entry name" value="PRibTrfase_dom"/>
</dbReference>
<dbReference type="InterPro" id="IPR029057">
    <property type="entry name" value="PRTase-like"/>
</dbReference>
<dbReference type="InterPro" id="IPR050054">
    <property type="entry name" value="UPRTase/APRTase"/>
</dbReference>
<dbReference type="NCBIfam" id="TIGR01090">
    <property type="entry name" value="apt"/>
    <property type="match status" value="1"/>
</dbReference>
<dbReference type="NCBIfam" id="NF002632">
    <property type="entry name" value="PRK02304.1-1"/>
    <property type="match status" value="1"/>
</dbReference>
<dbReference type="NCBIfam" id="NF002633">
    <property type="entry name" value="PRK02304.1-2"/>
    <property type="match status" value="1"/>
</dbReference>
<dbReference type="NCBIfam" id="NF002634">
    <property type="entry name" value="PRK02304.1-3"/>
    <property type="match status" value="1"/>
</dbReference>
<dbReference type="NCBIfam" id="NF002636">
    <property type="entry name" value="PRK02304.1-5"/>
    <property type="match status" value="1"/>
</dbReference>
<dbReference type="PANTHER" id="PTHR32315">
    <property type="entry name" value="ADENINE PHOSPHORIBOSYLTRANSFERASE"/>
    <property type="match status" value="1"/>
</dbReference>
<dbReference type="PANTHER" id="PTHR32315:SF3">
    <property type="entry name" value="ADENINE PHOSPHORIBOSYLTRANSFERASE"/>
    <property type="match status" value="1"/>
</dbReference>
<dbReference type="Pfam" id="PF00156">
    <property type="entry name" value="Pribosyltran"/>
    <property type="match status" value="1"/>
</dbReference>
<dbReference type="SUPFAM" id="SSF53271">
    <property type="entry name" value="PRTase-like"/>
    <property type="match status" value="1"/>
</dbReference>
<dbReference type="PROSITE" id="PS00103">
    <property type="entry name" value="PUR_PYR_PR_TRANSFER"/>
    <property type="match status" value="1"/>
</dbReference>
<proteinExistence type="inferred from homology"/>
<evidence type="ECO:0000255" key="1">
    <source>
        <dbReference type="HAMAP-Rule" id="MF_00004"/>
    </source>
</evidence>
<organism>
    <name type="scientific">Escherichia coli O7:K1 (strain IAI39 / ExPEC)</name>
    <dbReference type="NCBI Taxonomy" id="585057"/>
    <lineage>
        <taxon>Bacteria</taxon>
        <taxon>Pseudomonadati</taxon>
        <taxon>Pseudomonadota</taxon>
        <taxon>Gammaproteobacteria</taxon>
        <taxon>Enterobacterales</taxon>
        <taxon>Enterobacteriaceae</taxon>
        <taxon>Escherichia</taxon>
    </lineage>
</organism>
<accession>B7NIG1</accession>
<sequence length="183" mass="19859">MTATAQQLEYLKNSIKSIQDYPKPGILFRDVTSLLEDPKAYALSIDLLVERYKNAGITKVVGTEARGFLFGAPVALGLGVGFVPVRKPGKLPRETISETYDLEYGTDQLEIHVDAIKPGDKVLVVDDLLATGGTIEATVKLIRRLGGEVADAAFIINLFDLGGEQRLEKQGITSYSLVPFPGH</sequence>
<feature type="chain" id="PRO_1000116172" description="Adenine phosphoribosyltransferase">
    <location>
        <begin position="1"/>
        <end position="183"/>
    </location>
</feature>
<comment type="function">
    <text evidence="1">Catalyzes a salvage reaction resulting in the formation of AMP, that is energically less costly than de novo synthesis.</text>
</comment>
<comment type="catalytic activity">
    <reaction evidence="1">
        <text>AMP + diphosphate = 5-phospho-alpha-D-ribose 1-diphosphate + adenine</text>
        <dbReference type="Rhea" id="RHEA:16609"/>
        <dbReference type="ChEBI" id="CHEBI:16708"/>
        <dbReference type="ChEBI" id="CHEBI:33019"/>
        <dbReference type="ChEBI" id="CHEBI:58017"/>
        <dbReference type="ChEBI" id="CHEBI:456215"/>
        <dbReference type="EC" id="2.4.2.7"/>
    </reaction>
</comment>
<comment type="pathway">
    <text evidence="1">Purine metabolism; AMP biosynthesis via salvage pathway; AMP from adenine: step 1/1.</text>
</comment>
<comment type="subunit">
    <text evidence="1">Homodimer.</text>
</comment>
<comment type="subcellular location">
    <subcellularLocation>
        <location evidence="1">Cytoplasm</location>
    </subcellularLocation>
</comment>
<comment type="similarity">
    <text evidence="1">Belongs to the purine/pyrimidine phosphoribosyltransferase family.</text>
</comment>